<name>ALB3_ARATH</name>
<dbReference type="EMBL" id="U89272">
    <property type="protein sequence ID" value="AAB61458.1"/>
    <property type="molecule type" value="mRNA"/>
</dbReference>
<dbReference type="EMBL" id="AC005727">
    <property type="protein sequence ID" value="AAC79585.1"/>
    <property type="molecule type" value="Genomic_DNA"/>
</dbReference>
<dbReference type="EMBL" id="CP002685">
    <property type="protein sequence ID" value="AEC08172.1"/>
    <property type="molecule type" value="Genomic_DNA"/>
</dbReference>
<dbReference type="EMBL" id="CP002685">
    <property type="protein sequence ID" value="AEC08173.1"/>
    <property type="molecule type" value="Genomic_DNA"/>
</dbReference>
<dbReference type="EMBL" id="BT002436">
    <property type="protein sequence ID" value="AAO00796.1"/>
    <property type="molecule type" value="mRNA"/>
</dbReference>
<dbReference type="EMBL" id="BT006602">
    <property type="protein sequence ID" value="AAP31946.1"/>
    <property type="molecule type" value="mRNA"/>
</dbReference>
<dbReference type="EMBL" id="AY087081">
    <property type="protein sequence ID" value="AAM64642.1"/>
    <property type="molecule type" value="mRNA"/>
</dbReference>
<dbReference type="PIR" id="A84689">
    <property type="entry name" value="A84689"/>
</dbReference>
<dbReference type="RefSeq" id="NP_180446.1">
    <molecule id="Q8LBP4-1"/>
    <property type="nucleotide sequence ID" value="NM_128439.3"/>
</dbReference>
<dbReference type="RefSeq" id="NP_850125.1">
    <molecule id="Q8LBP4-2"/>
    <property type="nucleotide sequence ID" value="NM_179794.2"/>
</dbReference>
<dbReference type="PDB" id="5E4W">
    <property type="method" value="X-ray"/>
    <property type="resolution" value="2.80 A"/>
    <property type="chains" value="E/F=453-461"/>
</dbReference>
<dbReference type="PDBsum" id="5E4W"/>
<dbReference type="SMR" id="Q8LBP4"/>
<dbReference type="BioGRID" id="2779">
    <property type="interactions" value="10"/>
</dbReference>
<dbReference type="FunCoup" id="Q8LBP4">
    <property type="interactions" value="929"/>
</dbReference>
<dbReference type="IntAct" id="Q8LBP4">
    <property type="interactions" value="30"/>
</dbReference>
<dbReference type="MINT" id="Q8LBP4"/>
<dbReference type="STRING" id="3702.Q8LBP4"/>
<dbReference type="TCDB" id="2.A.9.2.1">
    <property type="family name" value="the membrane protein insertase (yidc/alb3/oxa1) family"/>
</dbReference>
<dbReference type="iPTMnet" id="Q8LBP4"/>
<dbReference type="PaxDb" id="3702-AT2G28800.1"/>
<dbReference type="ProteomicsDB" id="244706">
    <molecule id="Q8LBP4-1"/>
</dbReference>
<dbReference type="EnsemblPlants" id="AT2G28800.1">
    <molecule id="Q8LBP4-1"/>
    <property type="protein sequence ID" value="AT2G28800.1"/>
    <property type="gene ID" value="AT2G28800"/>
</dbReference>
<dbReference type="EnsemblPlants" id="AT2G28800.2">
    <molecule id="Q8LBP4-2"/>
    <property type="protein sequence ID" value="AT2G28800.2"/>
    <property type="gene ID" value="AT2G28800"/>
</dbReference>
<dbReference type="GeneID" id="817429"/>
<dbReference type="Gramene" id="AT2G28800.1">
    <molecule id="Q8LBP4-1"/>
    <property type="protein sequence ID" value="AT2G28800.1"/>
    <property type="gene ID" value="AT2G28800"/>
</dbReference>
<dbReference type="Gramene" id="AT2G28800.2">
    <molecule id="Q8LBP4-2"/>
    <property type="protein sequence ID" value="AT2G28800.2"/>
    <property type="gene ID" value="AT2G28800"/>
</dbReference>
<dbReference type="KEGG" id="ath:AT2G28800"/>
<dbReference type="Araport" id="AT2G28800"/>
<dbReference type="TAIR" id="AT2G28800">
    <property type="gene designation" value="ALB3"/>
</dbReference>
<dbReference type="eggNOG" id="KOG1239">
    <property type="taxonomic scope" value="Eukaryota"/>
</dbReference>
<dbReference type="InParanoid" id="Q8LBP4"/>
<dbReference type="OMA" id="GQPPIGW"/>
<dbReference type="OrthoDB" id="2148490at2759"/>
<dbReference type="PhylomeDB" id="Q8LBP4"/>
<dbReference type="BioCyc" id="ARA:AT2G28800-MONOMER"/>
<dbReference type="BioCyc" id="MetaCyc:AT2G28800-MONOMER"/>
<dbReference type="EvolutionaryTrace" id="Q8LBP4"/>
<dbReference type="PRO" id="PR:Q8LBP4"/>
<dbReference type="Proteomes" id="UP000006548">
    <property type="component" value="Chromosome 2"/>
</dbReference>
<dbReference type="ExpressionAtlas" id="Q8LBP4">
    <property type="expression patterns" value="baseline and differential"/>
</dbReference>
<dbReference type="GO" id="GO:0009507">
    <property type="term" value="C:chloroplast"/>
    <property type="evidence" value="ECO:0000314"/>
    <property type="project" value="TAIR"/>
</dbReference>
<dbReference type="GO" id="GO:0009534">
    <property type="term" value="C:chloroplast thylakoid"/>
    <property type="evidence" value="ECO:0007005"/>
    <property type="project" value="TAIR"/>
</dbReference>
<dbReference type="GO" id="GO:0009535">
    <property type="term" value="C:chloroplast thylakoid membrane"/>
    <property type="evidence" value="ECO:0000314"/>
    <property type="project" value="TAIR"/>
</dbReference>
<dbReference type="GO" id="GO:0005777">
    <property type="term" value="C:peroxisome"/>
    <property type="evidence" value="ECO:0007005"/>
    <property type="project" value="TAIR"/>
</dbReference>
<dbReference type="GO" id="GO:0032991">
    <property type="term" value="C:protein-containing complex"/>
    <property type="evidence" value="ECO:0000315"/>
    <property type="project" value="CAFA"/>
</dbReference>
<dbReference type="GO" id="GO:0032977">
    <property type="term" value="F:membrane insertase activity"/>
    <property type="evidence" value="ECO:0007669"/>
    <property type="project" value="InterPro"/>
</dbReference>
<dbReference type="GO" id="GO:0019904">
    <property type="term" value="F:protein domain specific binding"/>
    <property type="evidence" value="ECO:0000353"/>
    <property type="project" value="CAFA"/>
</dbReference>
<dbReference type="GO" id="GO:0070208">
    <property type="term" value="P:protein heterotrimerization"/>
    <property type="evidence" value="ECO:0000315"/>
    <property type="project" value="CAFA"/>
</dbReference>
<dbReference type="GO" id="GO:0045038">
    <property type="term" value="P:protein import into chloroplast thylakoid membrane"/>
    <property type="evidence" value="ECO:0000314"/>
    <property type="project" value="TAIR"/>
</dbReference>
<dbReference type="GO" id="GO:0072598">
    <property type="term" value="P:protein localization to chloroplast"/>
    <property type="evidence" value="ECO:0000315"/>
    <property type="project" value="TAIR"/>
</dbReference>
<dbReference type="GO" id="GO:0010027">
    <property type="term" value="P:thylakoid membrane organization"/>
    <property type="evidence" value="ECO:0000315"/>
    <property type="project" value="TAIR"/>
</dbReference>
<dbReference type="CDD" id="cd20070">
    <property type="entry name" value="5TM_YidC_Alb3"/>
    <property type="match status" value="1"/>
</dbReference>
<dbReference type="DisProt" id="DP00662"/>
<dbReference type="InterPro" id="IPR001708">
    <property type="entry name" value="YidC/ALB3/OXA1/COX18"/>
</dbReference>
<dbReference type="InterPro" id="IPR028055">
    <property type="entry name" value="YidC/Oxa/ALB_C"/>
</dbReference>
<dbReference type="InterPro" id="IPR047196">
    <property type="entry name" value="YidC_ALB_C"/>
</dbReference>
<dbReference type="NCBIfam" id="TIGR03592">
    <property type="entry name" value="yidC_oxa1_cterm"/>
    <property type="match status" value="1"/>
</dbReference>
<dbReference type="PANTHER" id="PTHR12428:SF47">
    <property type="entry name" value="INNER MEMBRANE PROTEIN ALBINO3, CHLOROPLASTIC"/>
    <property type="match status" value="1"/>
</dbReference>
<dbReference type="PANTHER" id="PTHR12428">
    <property type="entry name" value="OXA1"/>
    <property type="match status" value="1"/>
</dbReference>
<dbReference type="Pfam" id="PF02096">
    <property type="entry name" value="60KD_IMP"/>
    <property type="match status" value="1"/>
</dbReference>
<proteinExistence type="evidence at protein level"/>
<sequence length="462" mass="50245">MARVLVSSPSSFFGSPLIKPSSSLRHSGVGGGGTAQFLPYRSNNNKLFTTSTTVRFSLNEIPPFHGLDSSVDIGAIFTRAESLLYTIADAAVVGADSVVTTDSSAVQKSGGWFGFISDAMELVLKILKDGLSAVHVPYAYGFAIILLTIIVKAATYPLTKQQVESTLAMQNLQPKIKAIQQRYAGNQERIQLETSRLYKQAGVNPLAGCLPTLATIPVWIGLYQALSNVANEGLFTEGFFWIPSLGGPTSIAARQSGSGISWLFPFVDGHPPLGWYDTVAYLVLPVLLIASQYVSMEIMKPPQTDDPAQKNTLLVFKFLPLMIGYFALSVPSGLSIYWLTNNVLSTAQQVYLRKLGGAKPNMDENASKIISAGRAKRSIAQPDDAGERFRQLKEQEKRSKKNKAVAKDTVELVEESQSESEEGSDDEEEEAREGALASSTTSKPLPEVGQRRSKRSKRKRTV</sequence>
<protein>
    <recommendedName>
        <fullName>Inner membrane protein ALBINO3, chloroplastic</fullName>
    </recommendedName>
</protein>
<comment type="function">
    <text evidence="3 4 5 17">Required for the insertion of some light harvesting chlorophyll-binding proteins (LHCP) into the chloroplast thylakoid membrane. Required for the insertion of LHCB1, LHCB4.1 and LHCB5 proteins into thylakoid membrane, while it is not required for insertion of proteins PsbX, PsbW and PsbY.</text>
</comment>
<comment type="subunit">
    <text evidence="6 7 8 9 10 11 12 13 14 15 16">Homodimer. Forms a complex with CPFTSY and the signal recognition particle (cpSRP). Interacts (via C-terminus) with CAO/cpSRP43 (via chromodomains 2 and 3) and with LHCP. Interacts with PAM68, SECE1 and SCY1 (PubMed:12217076, PubMed:14517205, PubMed:15988575, PubMed:17513500, PubMed:20018841, PubMed:20828566, PubMed:20923938, PubMed:21832051). Interacts with TERC (PubMed:24612058). Interacts with ALB4 (PubMed:26265777). Interacts with STIC2 (PubMed:28684427).</text>
</comment>
<comment type="interaction">
    <interactant intactId="EBI-1806831">
        <id>Q8LBP4</id>
    </interactant>
    <interactant intactId="EBI-16630560">
        <id>Q9FYL3</id>
        <label>ALB4</label>
    </interactant>
    <organismsDiffer>false</organismsDiffer>
    <experiments>6</experiments>
</comment>
<comment type="interaction">
    <interactant intactId="EBI-1806831">
        <id>Q8LBP4</id>
    </interactant>
    <interactant intactId="EBI-780656">
        <id>O22265</id>
        <label>CAO</label>
    </interactant>
    <organismsDiffer>false</organismsDiffer>
    <experiments>10</experiments>
</comment>
<comment type="interaction">
    <interactant intactId="EBI-1806831">
        <id>Q8LBP4</id>
    </interactant>
    <interactant intactId="EBI-2353373">
        <id>O80842</id>
        <label>CPFTSY</label>
    </interactant>
    <organismsDiffer>false</organismsDiffer>
    <experiments>2</experiments>
</comment>
<comment type="interaction">
    <interactant intactId="EBI-1806831">
        <id>Q8LBP4</id>
    </interactant>
    <interactant intactId="EBI-1806802">
        <id>Q38885</id>
        <label>SCY1</label>
    </interactant>
    <organismsDiffer>false</organismsDiffer>
    <experiments>8</experiments>
</comment>
<comment type="interaction">
    <interactant intactId="EBI-1806831">
        <id>Q8LBP4</id>
    </interactant>
    <interactant intactId="EBI-4428759">
        <id>O82230</id>
        <label>STIC2</label>
    </interactant>
    <organismsDiffer>false</organismsDiffer>
    <experiments>4</experiments>
</comment>
<comment type="interaction">
    <interactant intactId="EBI-1806831">
        <id>Q8LBP4</id>
    </interactant>
    <interactant intactId="EBI-8295162">
        <id>P27490</id>
        <label>CAB8</label>
    </interactant>
    <organismsDiffer>true</organismsDiffer>
    <experiments>2</experiments>
</comment>
<comment type="subcellular location">
    <subcellularLocation>
        <location evidence="6 17">Plastid</location>
        <location evidence="6 17">Chloroplast thylakoid membrane</location>
        <topology evidence="6 17">Multi-pass membrane protein</topology>
    </subcellularLocation>
</comment>
<comment type="alternative products">
    <event type="alternative splicing"/>
    <isoform>
        <id>Q8LBP4-1</id>
        <name>1</name>
        <sequence type="displayed"/>
    </isoform>
    <isoform>
        <id>Q8LBP4-2</id>
        <name>2</name>
        <sequence type="described" ref="VSP_011358 VSP_011359"/>
    </isoform>
</comment>
<comment type="tissue specificity">
    <text evidence="17">Mainly expressed in organs that contain green tissues such as leaves, flower buds and stems.</text>
</comment>
<comment type="domain">
    <text>The C-terminus (339-462) is required for interaction with cpSRP.</text>
</comment>
<comment type="similarity">
    <text evidence="18">Belongs to the OXA1/ALB3/YidC (TC 2.A.9.2) family.</text>
</comment>
<comment type="caution">
    <text evidence="19 20 21 22">Two articles reported an interaction with LPA2; however, these papers were later retracted.</text>
</comment>
<organism>
    <name type="scientific">Arabidopsis thaliana</name>
    <name type="common">Mouse-ear cress</name>
    <dbReference type="NCBI Taxonomy" id="3702"/>
    <lineage>
        <taxon>Eukaryota</taxon>
        <taxon>Viridiplantae</taxon>
        <taxon>Streptophyta</taxon>
        <taxon>Embryophyta</taxon>
        <taxon>Tracheophyta</taxon>
        <taxon>Spermatophyta</taxon>
        <taxon>Magnoliopsida</taxon>
        <taxon>eudicotyledons</taxon>
        <taxon>Gunneridae</taxon>
        <taxon>Pentapetalae</taxon>
        <taxon>rosids</taxon>
        <taxon>malvids</taxon>
        <taxon>Brassicales</taxon>
        <taxon>Brassicaceae</taxon>
        <taxon>Camelineae</taxon>
        <taxon>Arabidopsis</taxon>
    </lineage>
</organism>
<gene>
    <name type="primary">ALB3</name>
    <name type="ordered locus">At2g28800</name>
    <name type="ORF">F8N16.9</name>
</gene>
<reference key="1">
    <citation type="journal article" date="1997" name="Plant Cell">
        <title>ALBINO3, an Arabidopsis nuclear gene essential for chloroplast differentiation, encodes a chloroplast protein that shows homology to proteins present in bacterial membranes and yeast mitochondria.</title>
        <authorList>
            <person name="Sundberg E."/>
            <person name="Slagter J.G."/>
            <person name="Fridborg I."/>
            <person name="Cleary S.P."/>
            <person name="Robinson C."/>
            <person name="Coupland G."/>
        </authorList>
    </citation>
    <scope>NUCLEOTIDE SEQUENCE [MRNA] (ISOFORM 1)</scope>
    <scope>FUNCTION</scope>
    <scope>SUBCELLULAR LOCATION</scope>
    <scope>TISSUE SPECIFICITY</scope>
    <source>
        <strain>cv. Landsberg erecta</strain>
    </source>
</reference>
<reference key="2">
    <citation type="journal article" date="1999" name="Nature">
        <title>Sequence and analysis of chromosome 2 of the plant Arabidopsis thaliana.</title>
        <authorList>
            <person name="Lin X."/>
            <person name="Kaul S."/>
            <person name="Rounsley S.D."/>
            <person name="Shea T.P."/>
            <person name="Benito M.-I."/>
            <person name="Town C.D."/>
            <person name="Fujii C.Y."/>
            <person name="Mason T.M."/>
            <person name="Bowman C.L."/>
            <person name="Barnstead M.E."/>
            <person name="Feldblyum T.V."/>
            <person name="Buell C.R."/>
            <person name="Ketchum K.A."/>
            <person name="Lee J.J."/>
            <person name="Ronning C.M."/>
            <person name="Koo H.L."/>
            <person name="Moffat K.S."/>
            <person name="Cronin L.A."/>
            <person name="Shen M."/>
            <person name="Pai G."/>
            <person name="Van Aken S."/>
            <person name="Umayam L."/>
            <person name="Tallon L.J."/>
            <person name="Gill J.E."/>
            <person name="Adams M.D."/>
            <person name="Carrera A.J."/>
            <person name="Creasy T.H."/>
            <person name="Goodman H.M."/>
            <person name="Somerville C.R."/>
            <person name="Copenhaver G.P."/>
            <person name="Preuss D."/>
            <person name="Nierman W.C."/>
            <person name="White O."/>
            <person name="Eisen J.A."/>
            <person name="Salzberg S.L."/>
            <person name="Fraser C.M."/>
            <person name="Venter J.C."/>
        </authorList>
    </citation>
    <scope>NUCLEOTIDE SEQUENCE [LARGE SCALE GENOMIC DNA]</scope>
    <source>
        <strain>cv. Columbia</strain>
    </source>
</reference>
<reference key="3">
    <citation type="journal article" date="2017" name="Plant J.">
        <title>Araport11: a complete reannotation of the Arabidopsis thaliana reference genome.</title>
        <authorList>
            <person name="Cheng C.Y."/>
            <person name="Krishnakumar V."/>
            <person name="Chan A.P."/>
            <person name="Thibaud-Nissen F."/>
            <person name="Schobel S."/>
            <person name="Town C.D."/>
        </authorList>
    </citation>
    <scope>GENOME REANNOTATION</scope>
    <source>
        <strain>cv. Columbia</strain>
    </source>
</reference>
<reference key="4">
    <citation type="journal article" date="2003" name="Science">
        <title>Empirical analysis of transcriptional activity in the Arabidopsis genome.</title>
        <authorList>
            <person name="Yamada K."/>
            <person name="Lim J."/>
            <person name="Dale J.M."/>
            <person name="Chen H."/>
            <person name="Shinn P."/>
            <person name="Palm C.J."/>
            <person name="Southwick A.M."/>
            <person name="Wu H.C."/>
            <person name="Kim C.J."/>
            <person name="Nguyen M."/>
            <person name="Pham P.K."/>
            <person name="Cheuk R.F."/>
            <person name="Karlin-Newmann G."/>
            <person name="Liu S.X."/>
            <person name="Lam B."/>
            <person name="Sakano H."/>
            <person name="Wu T."/>
            <person name="Yu G."/>
            <person name="Miranda M."/>
            <person name="Quach H.L."/>
            <person name="Tripp M."/>
            <person name="Chang C.H."/>
            <person name="Lee J.M."/>
            <person name="Toriumi M.J."/>
            <person name="Chan M.M."/>
            <person name="Tang C.C."/>
            <person name="Onodera C.S."/>
            <person name="Deng J.M."/>
            <person name="Akiyama K."/>
            <person name="Ansari Y."/>
            <person name="Arakawa T."/>
            <person name="Banh J."/>
            <person name="Banno F."/>
            <person name="Bowser L."/>
            <person name="Brooks S.Y."/>
            <person name="Carninci P."/>
            <person name="Chao Q."/>
            <person name="Choy N."/>
            <person name="Enju A."/>
            <person name="Goldsmith A.D."/>
            <person name="Gurjal M."/>
            <person name="Hansen N.F."/>
            <person name="Hayashizaki Y."/>
            <person name="Johnson-Hopson C."/>
            <person name="Hsuan V.W."/>
            <person name="Iida K."/>
            <person name="Karnes M."/>
            <person name="Khan S."/>
            <person name="Koesema E."/>
            <person name="Ishida J."/>
            <person name="Jiang P.X."/>
            <person name="Jones T."/>
            <person name="Kawai J."/>
            <person name="Kamiya A."/>
            <person name="Meyers C."/>
            <person name="Nakajima M."/>
            <person name="Narusaka M."/>
            <person name="Seki M."/>
            <person name="Sakurai T."/>
            <person name="Satou M."/>
            <person name="Tamse R."/>
            <person name="Vaysberg M."/>
            <person name="Wallender E.K."/>
            <person name="Wong C."/>
            <person name="Yamamura Y."/>
            <person name="Yuan S."/>
            <person name="Shinozaki K."/>
            <person name="Davis R.W."/>
            <person name="Theologis A."/>
            <person name="Ecker J.R."/>
        </authorList>
    </citation>
    <scope>NUCLEOTIDE SEQUENCE [LARGE SCALE MRNA] (ISOFORM 1)</scope>
    <source>
        <strain>cv. Columbia</strain>
    </source>
</reference>
<reference key="5">
    <citation type="submission" date="2002-03" db="EMBL/GenBank/DDBJ databases">
        <title>Full-length cDNA from Arabidopsis thaliana.</title>
        <authorList>
            <person name="Brover V.V."/>
            <person name="Troukhan M.E."/>
            <person name="Alexandrov N.A."/>
            <person name="Lu Y.-P."/>
            <person name="Flavell R.B."/>
            <person name="Feldmann K.A."/>
        </authorList>
    </citation>
    <scope>NUCLEOTIDE SEQUENCE [LARGE SCALE MRNA] (ISOFORM 1)</scope>
</reference>
<reference key="6">
    <citation type="journal article" date="2000" name="J. Biol. Chem.">
        <title>Chloroplast Oxa1p homolog albino3 is required for post-translational integration of the light harvesting chlorophyll-binding protein into thylakoid membranes.</title>
        <authorList>
            <person name="Moore M."/>
            <person name="Harrison M.S."/>
            <person name="Peterson E.C."/>
            <person name="Henry R."/>
        </authorList>
    </citation>
    <scope>FUNCTION</scope>
</reference>
<reference key="7">
    <citation type="journal article" date="2001" name="J. Biol. Chem.">
        <title>Distinct Albino3-dependent and -independent pathways for thylakoid membrane protein insertion.</title>
        <authorList>
            <person name="Woolhead C.A."/>
            <person name="Thompson S.J."/>
            <person name="Moore M."/>
            <person name="Tissier C."/>
            <person name="Mant A."/>
            <person name="Rodger A."/>
            <person name="Henry R."/>
            <person name="Robinson C."/>
        </authorList>
    </citation>
    <scope>FUNCTION</scope>
</reference>
<reference key="8">
    <citation type="journal article" date="2002" name="Biochem. J.">
        <title>The thylakoid membrane protein ALB3 associates with the cpSecY-translocase in Arabidopsis thaliana.</title>
        <authorList>
            <person name="Klostermann E."/>
            <person name="Droste Gen Helling I."/>
            <person name="Carde J.P."/>
            <person name="Schunemann D."/>
        </authorList>
    </citation>
    <scope>SUBCELLULAR LOCATION</scope>
    <scope>INTERACTION WITH SCY1</scope>
</reference>
<reference key="9">
    <citation type="journal article" date="2002" name="J. Biol. Chem.">
        <title>Chloroplast YidC homolog Albino3 can functionally complement the bacterial YidC depletion strain and promote membrane insertion of both bacterial and chloroplast thylakoid proteins.</title>
        <authorList>
            <person name="Jiang F."/>
            <person name="Yi L."/>
            <person name="Moore M."/>
            <person name="Chen M."/>
            <person name="Rohl T."/>
            <person name="Van Wijk K.-J."/>
            <person name="De Gier J.-W."/>
            <person name="Henry R."/>
            <person name="Dalbey R.E."/>
        </authorList>
    </citation>
    <scope>FUNCTION</scope>
</reference>
<reference key="10">
    <citation type="journal article" date="2003" name="J. Cell Biol.">
        <title>Functional interaction of chloroplast SRP/FtsY with the ALB3 translocase in thylakoids: substrate not required.</title>
        <authorList>
            <person name="Moore M."/>
            <person name="Goforth R.L."/>
            <person name="Mori H."/>
            <person name="Henry R."/>
        </authorList>
    </citation>
    <scope>INTERACTION WITH CPFTSY AND CPSRP COMPLEX</scope>
</reference>
<reference key="11">
    <citation type="journal article" date="2005" name="Appl. Microbiol. Biotechnol.">
        <title>The yeast split-ubiquitin system to study chloroplast membrane protein interactions.</title>
        <authorList>
            <person name="Pasch J.C."/>
            <person name="Nickelsen J."/>
            <person name="Schunemann D."/>
        </authorList>
    </citation>
    <scope>INTERACTION WITH SECE1 AND SCY1</scope>
</reference>
<reference key="12">
    <citation type="journal article" date="2007" name="Plant Cell">
        <title>Canonical signal recognition particle components can be bypassed for posttranslational protein targeting in chloroplasts.</title>
        <authorList>
            <person name="Tzvetkova-Chevolleau T."/>
            <person name="Hutin C."/>
            <person name="Noel L.D."/>
            <person name="Goforth R."/>
            <person name="Carde J.P."/>
            <person name="Caffarri S."/>
            <person name="Sinning I."/>
            <person name="Groves M."/>
            <person name="Teulon J.M."/>
            <person name="Hoffman N.E."/>
            <person name="Henry R."/>
            <person name="Havaux M."/>
            <person name="Nussaume L."/>
        </authorList>
    </citation>
    <scope>INTERACTION WITH CAO/CPSRP43</scope>
</reference>
<reference key="13">
    <citation type="journal article" date="2007" name="Plant Cell">
        <title>LPA2 is required for efficient assembly of photosystem II in Arabidopsis thaliana.</title>
        <authorList>
            <person name="Ma J."/>
            <person name="Peng L."/>
            <person name="Guo J."/>
            <person name="Lu Q."/>
            <person name="Lu C."/>
            <person name="Zhang L."/>
        </authorList>
    </citation>
    <scope>RETRACTED PAPER</scope>
</reference>
<reference key="14">
    <citation type="journal article" date="2016" name="Plant Cell">
        <authorList>
            <person name="Ma J."/>
            <person name="Peng L."/>
            <person name="Guo J."/>
            <person name="Lu Q."/>
            <person name="Lu C."/>
            <person name="Zhang L."/>
        </authorList>
    </citation>
    <scope>RETRACTION NOTICE OF PUBMED:17601825</scope>
</reference>
<reference key="15">
    <citation type="journal article" date="2009" name="Plant Physiol.">
        <title>Large-scale Arabidopsis phosphoproteome profiling reveals novel chloroplast kinase substrates and phosphorylation networks.</title>
        <authorList>
            <person name="Reiland S."/>
            <person name="Messerli G."/>
            <person name="Baerenfaller K."/>
            <person name="Gerrits B."/>
            <person name="Endler A."/>
            <person name="Grossmann J."/>
            <person name="Gruissem W."/>
            <person name="Baginsky S."/>
        </authorList>
    </citation>
    <scope>IDENTIFICATION BY MASS SPECTROMETRY [LARGE SCALE ANALYSIS]</scope>
</reference>
<reference key="16">
    <citation type="journal article" date="2010" name="FEBS Lett.">
        <title>Interplay between the cpSRP pathway components, the substrate LHCP and the translocase Alb3: an in vivo and in vitro study.</title>
        <authorList>
            <person name="Bals T."/>
            <person name="Duenschede B."/>
            <person name="Funke S."/>
            <person name="Schuenemann D."/>
        </authorList>
    </citation>
    <scope>INTERACTION WITH CAO/CPSRP43; FFC/CPSRP54; CPFTSY AND LHCP</scope>
</reference>
<reference key="17">
    <citation type="journal article" date="2010" name="J. Biol. Chem.">
        <title>The C terminus of the Alb3 membrane insertase recruits cpSRP43 to the thylakoid membrane.</title>
        <authorList>
            <person name="Falk S."/>
            <person name="Ravaud S."/>
            <person name="Koch J."/>
            <person name="Sinning I."/>
        </authorList>
    </citation>
    <scope>INTERACTION WITH CAO/CPSRP43</scope>
    <scope>MUTAGENESIS OF 376-LYS-ARG-377 AND 454-LYS-ARG-455</scope>
</reference>
<reference key="18">
    <citation type="journal article" date="2010" name="Plant Cell">
        <title>The Arabidopsis thylakoid protein PAM68 is required for efficient D1 biogenesis and photosystem II assembly.</title>
        <authorList>
            <person name="Armbruster U."/>
            <person name="Zuhlke J."/>
            <person name="Rengstl B."/>
            <person name="Kreller R."/>
            <person name="Makarenko E."/>
            <person name="Ruhle T."/>
            <person name="Schunemann D."/>
            <person name="Jahns P."/>
            <person name="Weisshaar B."/>
            <person name="Nickelsen J."/>
            <person name="Leister D."/>
        </authorList>
    </citation>
    <scope>INTERACTION WITH PAM68</scope>
</reference>
<reference key="19">
    <citation type="journal article" date="2010" name="Plant Physiol.">
        <title>Cooperation of LPA3 and LPA2 is essential for photosystem II assembly in Arabidopsis.</title>
        <authorList>
            <person name="Cai W."/>
            <person name="Ma J."/>
            <person name="Chi W."/>
            <person name="Zou M."/>
            <person name="Guo J."/>
            <person name="Lu C."/>
            <person name="Zhang L."/>
        </authorList>
    </citation>
    <scope>RETRACTED PAPER</scope>
</reference>
<reference key="20">
    <citation type="journal article" date="2017" name="Plant Physiol.">
        <authorList>
            <person name="Cai W."/>
            <person name="Ma J."/>
            <person name="Chi W."/>
            <person name="Zou M."/>
            <person name="Guo J."/>
            <person name="Lu C."/>
            <person name="Zhang L."/>
        </authorList>
    </citation>
    <scope>RETRACTION NOTICE OF PUBMED:20605914</scope>
</reference>
<reference key="21">
    <citation type="journal article" date="2011" name="J. Biol. Chem.">
        <title>Interaction studies between the chloroplast signal recognition particle subunit cpSRP43 and the full-length translocase Alb3 reveal a membrane-embedded binding region in Alb3.</title>
        <authorList>
            <person name="Dunschede B."/>
            <person name="Bals T."/>
            <person name="Funke S."/>
            <person name="Schunemann D."/>
        </authorList>
    </citation>
    <scope>INTERACTION WITH CAO/CPSRP43</scope>
    <scope>SUBUNIT</scope>
</reference>
<reference key="22">
    <citation type="journal article" date="2014" name="Plant J.">
        <title>The Arabidopsis tellurite resistance C protein together with ALB3 is involved in photosystem II protein synthesis.</title>
        <authorList>
            <person name="Schneider A."/>
            <person name="Steinberger I."/>
            <person name="Strissel H."/>
            <person name="Kunz H.H."/>
            <person name="Manavski N."/>
            <person name="Meurer J."/>
            <person name="Burkhard G."/>
            <person name="Jarzombski S."/>
            <person name="Schunemann D."/>
            <person name="Geimer S."/>
            <person name="Flugge U.I."/>
            <person name="Leister D."/>
        </authorList>
    </citation>
    <scope>INTERACTION WITH TERC</scope>
</reference>
<reference key="23">
    <citation type="journal article" date="2015" name="Plant Physiol.">
        <title>Genetic and physical interaction studies reveal functional similarities between ALBINO3 and ALBINO4 in Arabidopsis.</title>
        <authorList>
            <person name="Troesch R."/>
            <person name="Toepel M."/>
            <person name="Flores-Perez U."/>
            <person name="Jarvis P."/>
        </authorList>
    </citation>
    <scope>INTERACTION WITH ALB4</scope>
</reference>
<reference key="24">
    <citation type="journal article" date="2017" name="Plant Cell">
        <title>Suppressors of the chloroplast protein import mutant tic40 reveal a genetic link between protein import and thylakoid biogenesis.</title>
        <authorList>
            <person name="Bedard J."/>
            <person name="Troesch R."/>
            <person name="Wu F."/>
            <person name="Ling Q."/>
            <person name="Flores-Perez U."/>
            <person name="Toepel M."/>
            <person name="Nawaz F."/>
            <person name="Jarvis P."/>
        </authorList>
    </citation>
    <scope>INTERACTION WITH STIC2</scope>
</reference>
<reference key="25">
    <citation type="journal article" date="2015" name="Nat. Commun.">
        <title>Structural basis for cpSRP43 chromodomain selectivity and dynamics in Alb3 insertase interaction.</title>
        <authorList>
            <person name="Horn A."/>
            <person name="Hennig J."/>
            <person name="Ahmed Y.L."/>
            <person name="Stier G."/>
            <person name="Wild K."/>
            <person name="Sattler M."/>
            <person name="Sinning I."/>
        </authorList>
    </citation>
    <scope>X-RAY CRYSTALLOGRAPHY (2.80 ANGSTROMS) OF 453-461</scope>
</reference>
<accession>Q8LBP4</accession>
<accession>O04665</accession>
<evidence type="ECO:0000255" key="1"/>
<evidence type="ECO:0000256" key="2">
    <source>
        <dbReference type="SAM" id="MobiDB-lite"/>
    </source>
</evidence>
<evidence type="ECO:0000269" key="3">
    <source>
    </source>
</evidence>
<evidence type="ECO:0000269" key="4">
    <source>
    </source>
</evidence>
<evidence type="ECO:0000269" key="5">
    <source>
    </source>
</evidence>
<evidence type="ECO:0000269" key="6">
    <source>
    </source>
</evidence>
<evidence type="ECO:0000269" key="7">
    <source>
    </source>
</evidence>
<evidence type="ECO:0000269" key="8">
    <source>
    </source>
</evidence>
<evidence type="ECO:0000269" key="9">
    <source>
    </source>
</evidence>
<evidence type="ECO:0000269" key="10">
    <source>
    </source>
</evidence>
<evidence type="ECO:0000269" key="11">
    <source>
    </source>
</evidence>
<evidence type="ECO:0000269" key="12">
    <source>
    </source>
</evidence>
<evidence type="ECO:0000269" key="13">
    <source>
    </source>
</evidence>
<evidence type="ECO:0000269" key="14">
    <source>
    </source>
</evidence>
<evidence type="ECO:0000269" key="15">
    <source>
    </source>
</evidence>
<evidence type="ECO:0000269" key="16">
    <source>
    </source>
</evidence>
<evidence type="ECO:0000269" key="17">
    <source>
    </source>
</evidence>
<evidence type="ECO:0000305" key="18"/>
<evidence type="ECO:0000305" key="19">
    <source>
    </source>
</evidence>
<evidence type="ECO:0000305" key="20">
    <source>
    </source>
</evidence>
<evidence type="ECO:0000305" key="21">
    <source>
    </source>
</evidence>
<evidence type="ECO:0000305" key="22">
    <source>
    </source>
</evidence>
<evidence type="ECO:0007829" key="23">
    <source>
        <dbReference type="PDB" id="5E4W"/>
    </source>
</evidence>
<keyword id="KW-0002">3D-structure</keyword>
<keyword id="KW-0025">Alternative splicing</keyword>
<keyword id="KW-0150">Chloroplast</keyword>
<keyword id="KW-0472">Membrane</keyword>
<keyword id="KW-0934">Plastid</keyword>
<keyword id="KW-1185">Reference proteome</keyword>
<keyword id="KW-0793">Thylakoid</keyword>
<keyword id="KW-0809">Transit peptide</keyword>
<keyword id="KW-0812">Transmembrane</keyword>
<keyword id="KW-1133">Transmembrane helix</keyword>
<feature type="transit peptide" description="Chloroplast" evidence="1">
    <location>
        <begin position="1"/>
        <end position="56"/>
    </location>
</feature>
<feature type="chain" id="PRO_0000020365" description="Inner membrane protein ALBINO3, chloroplastic">
    <location>
        <begin position="57"/>
        <end position="462"/>
    </location>
</feature>
<feature type="topological domain" description="Lumenal" evidence="1">
    <location>
        <begin position="57"/>
        <end position="130"/>
    </location>
</feature>
<feature type="transmembrane region" description="Helical" evidence="1">
    <location>
        <begin position="131"/>
        <end position="151"/>
    </location>
</feature>
<feature type="topological domain" description="Stromal" evidence="1">
    <location>
        <begin position="152"/>
        <end position="205"/>
    </location>
</feature>
<feature type="transmembrane region" description="Helical" evidence="1">
    <location>
        <begin position="206"/>
        <end position="226"/>
    </location>
</feature>
<feature type="topological domain" description="Lumenal" evidence="1">
    <location>
        <begin position="227"/>
        <end position="232"/>
    </location>
</feature>
<feature type="transmembrane region" description="Helical" evidence="1">
    <location>
        <begin position="233"/>
        <end position="253"/>
    </location>
</feature>
<feature type="topological domain" description="Stromal" evidence="1">
    <location>
        <begin position="254"/>
        <end position="278"/>
    </location>
</feature>
<feature type="transmembrane region" description="Helical" evidence="1">
    <location>
        <begin position="279"/>
        <end position="299"/>
    </location>
</feature>
<feature type="topological domain" description="Lumenal" evidence="1">
    <location>
        <begin position="300"/>
        <end position="317"/>
    </location>
</feature>
<feature type="transmembrane region" description="Helical" evidence="1">
    <location>
        <begin position="318"/>
        <end position="338"/>
    </location>
</feature>
<feature type="topological domain" description="Stromal" evidence="1">
    <location>
        <begin position="339"/>
        <end position="462"/>
    </location>
</feature>
<feature type="region of interest" description="Interaction with CAO/cpSRP43">
    <location>
        <begin position="314"/>
        <end position="318"/>
    </location>
</feature>
<feature type="region of interest" description="Interaction with CAO/cpSRP43">
    <location>
        <begin position="374"/>
        <end position="388"/>
    </location>
</feature>
<feature type="region of interest" description="Disordered" evidence="2">
    <location>
        <begin position="393"/>
        <end position="462"/>
    </location>
</feature>
<feature type="compositionally biased region" description="Acidic residues" evidence="2">
    <location>
        <begin position="411"/>
        <end position="431"/>
    </location>
</feature>
<feature type="compositionally biased region" description="Basic residues" evidence="2">
    <location>
        <begin position="451"/>
        <end position="462"/>
    </location>
</feature>
<feature type="splice variant" id="VSP_011358" description="In isoform 2." evidence="18">
    <original>TNNVLSTAQ</original>
    <variation>VSLSLKLLI</variation>
    <location>
        <begin position="340"/>
        <end position="348"/>
    </location>
</feature>
<feature type="splice variant" id="VSP_011359" description="In isoform 2." evidence="18">
    <location>
        <begin position="349"/>
        <end position="462"/>
    </location>
</feature>
<feature type="mutagenesis site" description="Decreased interaction with CAO/cpSRP43. Loss of interaction with CAO/cpSRP43; when associated with 454-A-A-455." evidence="10">
    <original>KR</original>
    <variation>AA</variation>
    <location>
        <begin position="376"/>
        <end position="377"/>
    </location>
</feature>
<feature type="mutagenesis site" description="Decreased interaction with CAO/cpSRP43. Loss of interaction with CAO/cpSRP43; when associated with 376-A-A-377." evidence="10">
    <original>KR</original>
    <variation>AA</variation>
    <location>
        <begin position="454"/>
        <end position="455"/>
    </location>
</feature>
<feature type="sequence conflict" description="In Ref. 5; AAM64642." evidence="18" ref="5">
    <original>A</original>
    <variation>S</variation>
    <location>
        <position position="75"/>
    </location>
</feature>
<feature type="sequence conflict" description="In Ref. 5; AAM64642." evidence="18" ref="5">
    <original>G</original>
    <variation>S</variation>
    <location>
        <position position="202"/>
    </location>
</feature>
<feature type="sequence conflict" description="In Ref. 5; AAM64642." evidence="18" ref="5">
    <original>V</original>
    <variation>L</variation>
    <location>
        <position position="229"/>
    </location>
</feature>
<feature type="sequence conflict" description="In Ref. 5; AAM64642." evidence="18" ref="5">
    <original>R</original>
    <variation>T</variation>
    <location>
        <position position="388"/>
    </location>
</feature>
<feature type="strand" evidence="23">
    <location>
        <begin position="455"/>
        <end position="459"/>
    </location>
</feature>